<accession>P03475</accession>
<accession>Q463X2</accession>
<accession>Q75VQ3</accession>
<name>NRAM_I72A3</name>
<proteinExistence type="inferred from homology"/>
<organism>
    <name type="scientific">Influenza A virus (strain A/Memphis/102/1972 H3N2)</name>
    <dbReference type="NCBI Taxonomy" id="385640"/>
    <lineage>
        <taxon>Viruses</taxon>
        <taxon>Riboviria</taxon>
        <taxon>Orthornavirae</taxon>
        <taxon>Negarnaviricota</taxon>
        <taxon>Polyploviricotina</taxon>
        <taxon>Insthoviricetes</taxon>
        <taxon>Articulavirales</taxon>
        <taxon>Orthomyxoviridae</taxon>
        <taxon>Alphainfluenzavirus</taxon>
        <taxon>Alphainfluenzavirus influenzae</taxon>
        <taxon>Influenza A virus</taxon>
    </lineage>
</organism>
<sequence>MNPNQKIITIGSVSLTIATICFLMQIAILVTTVTLHFKQYECDSPANNQVMPCEPIIIERNITEIVYLTNTTIEKEICPKLVEYRNWSKPQCKITGFAPFSKDNSIRLSAGGDIWVTREPYVSCDPGKCYQFALGQGTTLDNKHSNDTIHDRTPHRTLLMNELGVPFHLGTRQVCIAWSSSSCHDGKAWLHVCVTGYDKNATASFIYDGRLVDSIGSWSQNILRTQESECVCINGTCTVVMTDGSASGRADTKILFIEEGKIVHISPLSGSAQHVEECSCYPRYPGVRCICRDNWKGSNRPVVDINVKDYSIDSSYVCSGLVGDTPRNNDRSSNSYCRNPNNEKGNHGVKGWAFDDGNDVWMGRTISEDSRSGYETFKVIGGWSTPNSKLQINRQVIVDSDNRSGYSGIFSVEGKSCINRCFYVELIRGREQETRVWWTSNSIVVFCGTSGTYGTGSWPDGADINLMPI</sequence>
<protein>
    <recommendedName>
        <fullName evidence="1">Neuraminidase</fullName>
        <ecNumber evidence="1">3.2.1.18</ecNumber>
    </recommendedName>
</protein>
<keyword id="KW-0106">Calcium</keyword>
<keyword id="KW-1015">Disulfide bond</keyword>
<keyword id="KW-0325">Glycoprotein</keyword>
<keyword id="KW-0326">Glycosidase</keyword>
<keyword id="KW-1032">Host cell membrane</keyword>
<keyword id="KW-1043">Host membrane</keyword>
<keyword id="KW-0378">Hydrolase</keyword>
<keyword id="KW-0472">Membrane</keyword>
<keyword id="KW-0479">Metal-binding</keyword>
<keyword id="KW-0735">Signal-anchor</keyword>
<keyword id="KW-0812">Transmembrane</keyword>
<keyword id="KW-1133">Transmembrane helix</keyword>
<keyword id="KW-0946">Virion</keyword>
<gene>
    <name evidence="1" type="primary">NA</name>
</gene>
<feature type="chain" id="PRO_0000078708" description="Neuraminidase">
    <location>
        <begin position="1"/>
        <end position="469"/>
    </location>
</feature>
<feature type="topological domain" description="Intravirion" evidence="1">
    <location>
        <begin position="1"/>
        <end position="9"/>
    </location>
</feature>
<feature type="transmembrane region" description="Helical" evidence="1">
    <location>
        <begin position="10"/>
        <end position="30"/>
    </location>
</feature>
<feature type="topological domain" description="Virion surface" evidence="1">
    <location>
        <begin position="31"/>
        <end position="469"/>
    </location>
</feature>
<feature type="region of interest" description="Involved in apical transport and lipid raft association" evidence="1">
    <location>
        <begin position="11"/>
        <end position="33"/>
    </location>
</feature>
<feature type="region of interest" description="Hypervariable stalk region" evidence="1">
    <location>
        <begin position="36"/>
        <end position="88"/>
    </location>
</feature>
<feature type="region of interest" description="Head of neuraminidase" evidence="1">
    <location>
        <begin position="91"/>
        <end position="469"/>
    </location>
</feature>
<feature type="active site" description="Proton donor/acceptor" evidence="1">
    <location>
        <position position="151"/>
    </location>
</feature>
<feature type="active site" description="Nucleophile" evidence="1">
    <location>
        <position position="406"/>
    </location>
</feature>
<feature type="binding site" evidence="1">
    <location>
        <position position="118"/>
    </location>
    <ligand>
        <name>substrate</name>
    </ligand>
</feature>
<feature type="binding site" evidence="1">
    <location>
        <position position="152"/>
    </location>
    <ligand>
        <name>substrate</name>
    </ligand>
</feature>
<feature type="binding site" evidence="1">
    <location>
        <begin position="276"/>
        <end position="277"/>
    </location>
    <ligand>
        <name>substrate</name>
    </ligand>
</feature>
<feature type="binding site" evidence="1">
    <location>
        <position position="292"/>
    </location>
    <ligand>
        <name>substrate</name>
    </ligand>
</feature>
<feature type="binding site" evidence="1">
    <location>
        <position position="293"/>
    </location>
    <ligand>
        <name>Ca(2+)</name>
        <dbReference type="ChEBI" id="CHEBI:29108"/>
    </ligand>
</feature>
<feature type="binding site" evidence="1">
    <location>
        <position position="297"/>
    </location>
    <ligand>
        <name>Ca(2+)</name>
        <dbReference type="ChEBI" id="CHEBI:29108"/>
    </ligand>
</feature>
<feature type="binding site" evidence="1">
    <location>
        <position position="324"/>
    </location>
    <ligand>
        <name>Ca(2+)</name>
        <dbReference type="ChEBI" id="CHEBI:29108"/>
    </ligand>
</feature>
<feature type="binding site" evidence="1">
    <location>
        <position position="371"/>
    </location>
    <ligand>
        <name>substrate</name>
    </ligand>
</feature>
<feature type="glycosylation site" description="N-linked (GlcNAc...) asparagine; by host" evidence="1">
    <location>
        <position position="61"/>
    </location>
</feature>
<feature type="glycosylation site" description="N-linked (GlcNAc...) asparagine; by host" evidence="1">
    <location>
        <position position="70"/>
    </location>
</feature>
<feature type="glycosylation site" description="N-linked (GlcNAc...) asparagine; by host" evidence="1">
    <location>
        <position position="86"/>
    </location>
</feature>
<feature type="glycosylation site" description="N-linked (GlcNAc...) asparagine; by host" evidence="1">
    <location>
        <position position="146"/>
    </location>
</feature>
<feature type="glycosylation site" description="N-linked (GlcNAc...) asparagine; by host" evidence="1">
    <location>
        <position position="200"/>
    </location>
</feature>
<feature type="glycosylation site" description="N-linked (GlcNAc...) asparagine; by host" evidence="1">
    <location>
        <position position="234"/>
    </location>
</feature>
<feature type="glycosylation site" description="N-linked (GlcNAc...) asparagine; by host" evidence="1">
    <location>
        <position position="402"/>
    </location>
</feature>
<feature type="disulfide bond" evidence="1">
    <location>
        <begin position="92"/>
        <end position="417"/>
    </location>
</feature>
<feature type="disulfide bond" evidence="1">
    <location>
        <begin position="124"/>
        <end position="129"/>
    </location>
</feature>
<feature type="disulfide bond" evidence="1">
    <location>
        <begin position="183"/>
        <end position="230"/>
    </location>
</feature>
<feature type="disulfide bond" evidence="1">
    <location>
        <begin position="232"/>
        <end position="237"/>
    </location>
</feature>
<feature type="disulfide bond" evidence="1">
    <location>
        <begin position="278"/>
        <end position="291"/>
    </location>
</feature>
<feature type="disulfide bond" evidence="1">
    <location>
        <begin position="280"/>
        <end position="289"/>
    </location>
</feature>
<feature type="disulfide bond" evidence="1">
    <location>
        <begin position="318"/>
        <end position="337"/>
    </location>
</feature>
<feature type="disulfide bond" evidence="1">
    <location>
        <begin position="421"/>
        <end position="447"/>
    </location>
</feature>
<feature type="sequence conflict" description="In Ref. 3; CAA24275." ref="3">
    <original>I</original>
    <variation>M</variation>
    <location>
        <position position="28"/>
    </location>
</feature>
<feature type="sequence conflict" description="In Ref. 3; CAA24275." ref="3">
    <original>A</original>
    <variation>G</variation>
    <location>
        <position position="46"/>
    </location>
</feature>
<feature type="sequence conflict" description="In Ref. 3; CAA24275." ref="3">
    <original>MP</original>
    <variation>TL</variation>
    <location>
        <begin position="51"/>
        <end position="52"/>
    </location>
</feature>
<feature type="sequence conflict" description="In Ref. 3; CAA24275." ref="3">
    <original>Y</original>
    <variation>H</variation>
    <location>
        <position position="67"/>
    </location>
</feature>
<feature type="sequence conflict" description="In Ref. 1; BAD16643." ref="1">
    <original>WS</original>
    <variation>LF</variation>
    <location>
        <begin position="383"/>
        <end position="384"/>
    </location>
</feature>
<dbReference type="EC" id="3.2.1.18" evidence="1"/>
<dbReference type="EMBL" id="AB124659">
    <property type="protein sequence ID" value="BAD16643.1"/>
    <property type="molecule type" value="Genomic_RNA"/>
</dbReference>
<dbReference type="EMBL" id="CY002098">
    <property type="protein sequence ID" value="AAZ43386.1"/>
    <property type="molecule type" value="Genomic_RNA"/>
</dbReference>
<dbReference type="EMBL" id="V01091">
    <property type="protein sequence ID" value="CAA24275.1"/>
    <property type="molecule type" value="Unassigned_RNA"/>
</dbReference>
<dbReference type="SMR" id="P03475"/>
<dbReference type="CAZy" id="GH34">
    <property type="family name" value="Glycoside Hydrolase Family 34"/>
</dbReference>
<dbReference type="GlyCosmos" id="P03475">
    <property type="glycosylation" value="7 sites, No reported glycans"/>
</dbReference>
<dbReference type="PRO" id="PR:P03475"/>
<dbReference type="Proteomes" id="UP000118421">
    <property type="component" value="Genome"/>
</dbReference>
<dbReference type="GO" id="GO:0020002">
    <property type="term" value="C:host cell plasma membrane"/>
    <property type="evidence" value="ECO:0007669"/>
    <property type="project" value="UniProtKB-SubCell"/>
</dbReference>
<dbReference type="GO" id="GO:0016020">
    <property type="term" value="C:membrane"/>
    <property type="evidence" value="ECO:0007669"/>
    <property type="project" value="UniProtKB-UniRule"/>
</dbReference>
<dbReference type="GO" id="GO:0055036">
    <property type="term" value="C:virion membrane"/>
    <property type="evidence" value="ECO:0007669"/>
    <property type="project" value="UniProtKB-SubCell"/>
</dbReference>
<dbReference type="GO" id="GO:0004308">
    <property type="term" value="F:exo-alpha-sialidase activity"/>
    <property type="evidence" value="ECO:0007669"/>
    <property type="project" value="UniProtKB-UniRule"/>
</dbReference>
<dbReference type="GO" id="GO:0046872">
    <property type="term" value="F:metal ion binding"/>
    <property type="evidence" value="ECO:0007669"/>
    <property type="project" value="UniProtKB-UniRule"/>
</dbReference>
<dbReference type="GO" id="GO:0005975">
    <property type="term" value="P:carbohydrate metabolic process"/>
    <property type="evidence" value="ECO:0007669"/>
    <property type="project" value="InterPro"/>
</dbReference>
<dbReference type="GO" id="GO:0046761">
    <property type="term" value="P:viral budding from plasma membrane"/>
    <property type="evidence" value="ECO:0007669"/>
    <property type="project" value="UniProtKB-UniRule"/>
</dbReference>
<dbReference type="CDD" id="cd15483">
    <property type="entry name" value="Influenza_NA"/>
    <property type="match status" value="1"/>
</dbReference>
<dbReference type="Gene3D" id="2.120.10.10">
    <property type="match status" value="1"/>
</dbReference>
<dbReference type="HAMAP" id="MF_04071">
    <property type="entry name" value="INFV_NRAM"/>
    <property type="match status" value="1"/>
</dbReference>
<dbReference type="InterPro" id="IPR001860">
    <property type="entry name" value="Glyco_hydro_34"/>
</dbReference>
<dbReference type="InterPro" id="IPR033654">
    <property type="entry name" value="Sialidase_Influenza_A/B"/>
</dbReference>
<dbReference type="InterPro" id="IPR036278">
    <property type="entry name" value="Sialidase_sf"/>
</dbReference>
<dbReference type="Pfam" id="PF00064">
    <property type="entry name" value="Neur"/>
    <property type="match status" value="1"/>
</dbReference>
<dbReference type="SUPFAM" id="SSF50939">
    <property type="entry name" value="Sialidases"/>
    <property type="match status" value="1"/>
</dbReference>
<comment type="function">
    <text evidence="1">Catalyzes the removal of terminal sialic acid residues from viral and cellular glycoconjugates. Cleaves off the terminal sialic acids on the glycosylated HA during virus budding to facilitate virus release. Additionally helps virus spread through the circulation by further removing sialic acids from the cell surface. These cleavages prevent self-aggregation and ensure the efficient spread of the progeny virus from cell to cell. Otherwise, infection would be limited to one round of replication. Described as a receptor-destroying enzyme because it cleaves a terminal sialic acid from the cellular receptors. May facilitate viral invasion of the upper airways by cleaving the sialic acid moieties on the mucin of the airway epithelial cells. Likely to plays a role in the budding process through its association with lipid rafts during intracellular transport. May additionally display a raft-association independent effect on budding. Plays a role in the determination of host range restriction on replication and virulence. Sialidase activity in late endosome/lysosome traffic seems to enhance virus replication.</text>
</comment>
<comment type="catalytic activity">
    <reaction evidence="1">
        <text>Hydrolysis of alpha-(2-&gt;3)-, alpha-(2-&gt;6)-, alpha-(2-&gt;8)- glycosidic linkages of terminal sialic acid residues in oligosaccharides, glycoproteins, glycolipids, colominic acid and synthetic substrates.</text>
        <dbReference type="EC" id="3.2.1.18"/>
    </reaction>
</comment>
<comment type="cofactor">
    <cofactor evidence="1">
        <name>Ca(2+)</name>
        <dbReference type="ChEBI" id="CHEBI:29108"/>
    </cofactor>
</comment>
<comment type="activity regulation">
    <text evidence="1">Inhibited by the neuraminidase inhibitors zanamivir (Relenza) and oseltamivir (Tamiflu). These drugs interfere with the release of progeny virus from infected cells and are effective against all influenza strains. Resistance to neuraminidase inhibitors is quite rare.</text>
</comment>
<comment type="subunit">
    <text evidence="1">Homotetramer.</text>
</comment>
<comment type="subcellular location">
    <subcellularLocation>
        <location evidence="1">Virion membrane</location>
    </subcellularLocation>
    <subcellularLocation>
        <location evidence="1">Host apical cell membrane</location>
        <topology evidence="1">Single-pass type II membrane protein</topology>
    </subcellularLocation>
    <text evidence="1">Preferentially accumulates at the apical plasma membrane in infected polarized epithelial cells, which is the virus assembly site. Uses lipid rafts for cell surface transport and apical sorting. In the virion, forms a mushroom-shaped spike on the surface of the membrane.</text>
</comment>
<comment type="domain">
    <text evidence="1">Intact N-terminus is essential for virion morphogenesis. Possesses two apical sorting signals, one in the ectodomain, which is likely to be a glycan, and the other in the transmembrane domain. The transmembrane domain also plays a role in lipid raft association.</text>
</comment>
<comment type="PTM">
    <text evidence="1">N-glycosylated.</text>
</comment>
<comment type="miscellaneous">
    <text>The influenza A genome consist of 8 RNA segments. Genetic variation of hemagglutinin and/or neuraminidase genes results in the emergence of new influenza strains. The mechanism of variation can be the result of point mutations or the result of genetic reassortment between segments of two different strains.</text>
</comment>
<comment type="similarity">
    <text evidence="1">Belongs to the glycosyl hydrolase 34 family.</text>
</comment>
<reference key="1">
    <citation type="journal article" date="2004" name="FEBS Lett.">
        <title>Evolutional analysis of human influenza A virus N2 neuraminidase genes based on the transition of the low-pH stability of sialidase activity.</title>
        <authorList>
            <person name="Suzuki T."/>
            <person name="Takahashi T."/>
            <person name="Saito T."/>
            <person name="Guo C.T."/>
            <person name="Hidari K.I.-P.J."/>
            <person name="Miyamoto D."/>
            <person name="Suzuki Y."/>
        </authorList>
    </citation>
    <scope>NUCLEOTIDE SEQUENCE [GENOMIC RNA]</scope>
</reference>
<reference key="2">
    <citation type="submission" date="2005-08" db="EMBL/GenBank/DDBJ databases">
        <title>The NIAID influenza genome sequencing project.</title>
        <authorList>
            <person name="Ghedin E."/>
            <person name="Spiro D."/>
            <person name="Miller N."/>
            <person name="Zaborsky J."/>
            <person name="Feldblyum T."/>
            <person name="Subbu V."/>
            <person name="Shumway M."/>
            <person name="Sparenborg J."/>
            <person name="Groveman L."/>
            <person name="Halpin R."/>
            <person name="Sitz J."/>
            <person name="Koo H."/>
            <person name="Salzberg S.L."/>
            <person name="Webster R.G."/>
            <person name="Hoffmann E."/>
            <person name="Krauss S."/>
            <person name="Naeve C."/>
            <person name="Bao Y."/>
            <person name="Bolotov P."/>
            <person name="Dernovoy D."/>
            <person name="Kiryutin B."/>
            <person name="Lipman D.J."/>
            <person name="Tatusova T."/>
        </authorList>
    </citation>
    <scope>NUCLEOTIDE SEQUENCE [GENOMIC RNA]</scope>
</reference>
<reference key="3">
    <citation type="journal article" date="1982" name="Biochemistry">
        <title>Variation in the membrane-insertion and 'stalk' sequences in eight subtypes of influenza type A virus neuraminidase.</title>
        <authorList>
            <person name="Blok J."/>
            <person name="Air G.M."/>
        </authorList>
    </citation>
    <scope>NUCLEOTIDE SEQUENCE [GENOMIC RNA] OF 1-91</scope>
</reference>
<reference key="4">
    <citation type="journal article" date="2004" name="Virus Res.">
        <title>Assembly and budding of influenza virus.</title>
        <authorList>
            <person name="Nayak D.P."/>
            <person name="Hui E.K."/>
            <person name="Barman S."/>
        </authorList>
    </citation>
    <scope>REVIEW</scope>
</reference>
<reference key="5">
    <citation type="journal article" date="2005" name="N. Engl. J. Med.">
        <title>Neuraminidase inhibitors for influenza.</title>
        <authorList>
            <person name="Moscona A."/>
        </authorList>
    </citation>
    <scope>REVIEW</scope>
</reference>
<reference key="6">
    <citation type="journal article" date="2005" name="Biol. Pharm. Bull.">
        <title>Sialobiology of influenza: molecular mechanism of host range variation of influenza viruses.</title>
        <authorList>
            <person name="Suzuki Y."/>
        </authorList>
    </citation>
    <scope>REVIEW</scope>
</reference>
<organismHost>
    <name type="scientific">Aves</name>
    <dbReference type="NCBI Taxonomy" id="8782"/>
</organismHost>
<organismHost>
    <name type="scientific">Cetacea</name>
    <name type="common">whales</name>
    <dbReference type="NCBI Taxonomy" id="9721"/>
</organismHost>
<organismHost>
    <name type="scientific">Homo sapiens</name>
    <name type="common">Human</name>
    <dbReference type="NCBI Taxonomy" id="9606"/>
</organismHost>
<organismHost>
    <name type="scientific">Phocidae</name>
    <name type="common">true seals</name>
    <dbReference type="NCBI Taxonomy" id="9709"/>
</organismHost>
<organismHost>
    <name type="scientific">Sus scrofa</name>
    <name type="common">Pig</name>
    <dbReference type="NCBI Taxonomy" id="9823"/>
</organismHost>
<evidence type="ECO:0000255" key="1">
    <source>
        <dbReference type="HAMAP-Rule" id="MF_04071"/>
    </source>
</evidence>